<keyword id="KW-0002">3D-structure</keyword>
<keyword id="KW-0007">Acetylation</keyword>
<keyword id="KW-0025">Alternative splicing</keyword>
<keyword id="KW-0067">ATP-binding</keyword>
<keyword id="KW-0903">Direct protein sequencing</keyword>
<keyword id="KW-0460">Magnesium</keyword>
<keyword id="KW-0464">Manganese</keyword>
<keyword id="KW-0479">Metal-binding</keyword>
<keyword id="KW-0507">mRNA processing</keyword>
<keyword id="KW-0547">Nucleotide-binding</keyword>
<keyword id="KW-0539">Nucleus</keyword>
<keyword id="KW-0597">Phosphoprotein</keyword>
<keyword id="KW-1267">Proteomics identification</keyword>
<keyword id="KW-1185">Reference proteome</keyword>
<keyword id="KW-0694">RNA-binding</keyword>
<keyword id="KW-0808">Transferase</keyword>
<evidence type="ECO:0000250" key="1"/>
<evidence type="ECO:0000256" key="2">
    <source>
        <dbReference type="SAM" id="MobiDB-lite"/>
    </source>
</evidence>
<evidence type="ECO:0000269" key="3">
    <source>
    </source>
</evidence>
<evidence type="ECO:0000269" key="4">
    <source>
    </source>
</evidence>
<evidence type="ECO:0000269" key="5">
    <source>
    </source>
</evidence>
<evidence type="ECO:0000269" key="6">
    <source>
    </source>
</evidence>
<evidence type="ECO:0000303" key="7">
    <source>
    </source>
</evidence>
<evidence type="ECO:0000303" key="8">
    <source ref="8"/>
</evidence>
<evidence type="ECO:0000305" key="9"/>
<evidence type="ECO:0000312" key="10">
    <source>
        <dbReference type="HGNC" id="HGNC:14982"/>
    </source>
</evidence>
<evidence type="ECO:0007744" key="11">
    <source>
    </source>
</evidence>
<evidence type="ECO:0007744" key="12">
    <source>
    </source>
</evidence>
<evidence type="ECO:0007744" key="13">
    <source>
    </source>
</evidence>
<evidence type="ECO:0007744" key="14">
    <source>
    </source>
</evidence>
<evidence type="ECO:0007829" key="15">
    <source>
        <dbReference type="PDB" id="4LT6"/>
    </source>
</evidence>
<protein>
    <recommendedName>
        <fullName>Poly(A) polymerase gamma</fullName>
        <shortName>PAP-gamma</shortName>
        <ecNumber evidence="3 4 5">2.7.7.19</ecNumber>
    </recommendedName>
    <alternativeName>
        <fullName>Neo-poly(A) polymerase</fullName>
        <shortName evidence="7">Neo-PAP</shortName>
    </alternativeName>
    <alternativeName>
        <fullName>Polynucleotide adenylyltransferase gamma</fullName>
    </alternativeName>
    <alternativeName>
        <fullName>SRP RNA 3'-adenylating enzyme</fullName>
    </alternativeName>
    <alternativeName>
        <fullName>Signal recognition particle RNA-adenylating enzyme</fullName>
        <shortName>SRP RNA-adenylating enzyme</shortName>
    </alternativeName>
</protein>
<comment type="function">
    <text evidence="3 5">Responsible for the post-transcriptional adenylation of the 3'-terminal of mRNA precursors and several small RNAs including signal recognition particle (SRP) RNA, nuclear 7SK RNA, U2 small nuclear RNA, and ribosomal 5S RNA.</text>
</comment>
<comment type="catalytic activity">
    <reaction evidence="3 4 5">
        <text>RNA(n) + ATP = RNA(n)-3'-adenine ribonucleotide + diphosphate</text>
        <dbReference type="Rhea" id="RHEA:11332"/>
        <dbReference type="Rhea" id="RHEA-COMP:14527"/>
        <dbReference type="Rhea" id="RHEA-COMP:17347"/>
        <dbReference type="ChEBI" id="CHEBI:30616"/>
        <dbReference type="ChEBI" id="CHEBI:33019"/>
        <dbReference type="ChEBI" id="CHEBI:140395"/>
        <dbReference type="ChEBI" id="CHEBI:173115"/>
        <dbReference type="EC" id="2.7.7.19"/>
    </reaction>
</comment>
<comment type="cofactor">
    <cofactor evidence="1">
        <name>Mg(2+)</name>
        <dbReference type="ChEBI" id="CHEBI:18420"/>
    </cofactor>
    <cofactor evidence="1">
        <name>Mn(2+)</name>
        <dbReference type="ChEBI" id="CHEBI:29035"/>
    </cofactor>
    <text evidence="1">Binds 2 magnesium ions. Also active with manganese.</text>
</comment>
<comment type="biophysicochemical properties">
    <kinetics>
        <KM evidence="4">0.051 uM for poly(A)(15)</KM>
    </kinetics>
</comment>
<comment type="subcellular location">
    <subcellularLocation>
        <location evidence="3 4 5">Nucleus</location>
    </subcellularLocation>
</comment>
<comment type="alternative products">
    <event type="alternative splicing"/>
    <isoform>
        <id>Q9BWT3-1</id>
        <name>1</name>
        <sequence type="displayed"/>
    </isoform>
    <isoform>
        <id>Q9BWT3-2</id>
        <name>2</name>
        <sequence type="described" ref="VSP_054379"/>
    </isoform>
</comment>
<comment type="tissue specificity">
    <text evidence="5">Expressed predominantly in testis, and weakly in other tissues. Overexpressed in several tumors.</text>
</comment>
<comment type="similarity">
    <text evidence="9">Belongs to the poly(A) polymerase family.</text>
</comment>
<comment type="sequence caution" evidence="9">
    <conflict type="erroneous initiation">
        <sequence resource="EMBL-CDS" id="BAB14604"/>
    </conflict>
    <text>Truncated N-terminus.</text>
</comment>
<sequence length="736" mass="82803">MKEMSANTVLDSQRQQKHYGITSPISLASPKEIDHIYTQKLIDAMKPFGVFEDEEELNHRLVVLGKLNNLVKEWISDVSESKNLPPSVVATVGGKIFTFGSYRLGVHTKGADIDALCVAPRHVERSDFFQSFFEKLKHQDGIRNLRAVEDAFVPVIKFEFDGIEIDLVFARLAIQTISDNLDLRDDSRLRSLDIRCIRSLNGCRVTDEILHLVPNKETFRLTLRAVKLWAKRRGIYSNMLGFLGGVSWAMLVARTCQLYPNAAASTLVHKFFLVFSKWEWPNPVLLKQPEESNLNLPVWDPRVNPSDRYHLMPIITPAYPQQNSTYNVSTSTRTVMVEEFKQGLAVTDEILQGKSDWSKLLEPPNFFQKYRHYIVLTASASTEENHLEWVGLVESKIRVLVGNLERNEFITLAHVNPQSFPGNKEHHKDNNYVSMWFLGIIFRRVENAESVNIDLTYDIQSFTDTVYRQANNINMLKEGMKIEATHVKKKQLHHYLPAEILQKKKKQSLSDVNRSSGGLQSKRLSLDSSCLDSSRDTDNGTPFNSPASKSDSPSVGETERNSAEPAAVIVEKPLSVPPAQGLSIPVIGAKVDSTVKTVSPPTVCTIPTVVGRNVIPRITTPHNPAQGQPHLNGMSNITKTVTPKRSHSPSIDGTPKRLKDVEKFIRLESTFKDPRTAEERKRKSVDAIGGESMPIPTIDTSRKKRLPSKELPDSSSPVPANNIRVIKNSIRLTLNR</sequence>
<gene>
    <name evidence="10" type="primary">PAPOLG</name>
    <name type="synonym">PAP2</name>
    <name type="synonym">PAPG</name>
</gene>
<name>PAPOG_HUMAN</name>
<feature type="chain" id="PRO_0000051624" description="Poly(A) polymerase gamma">
    <location>
        <begin position="1"/>
        <end position="736"/>
    </location>
</feature>
<feature type="region of interest" description="Disordered" evidence="2">
    <location>
        <begin position="506"/>
        <end position="564"/>
    </location>
</feature>
<feature type="region of interest" description="Disordered" evidence="2">
    <location>
        <begin position="673"/>
        <end position="720"/>
    </location>
</feature>
<feature type="compositionally biased region" description="Polar residues" evidence="2">
    <location>
        <begin position="509"/>
        <end position="519"/>
    </location>
</feature>
<feature type="compositionally biased region" description="Low complexity" evidence="2">
    <location>
        <begin position="521"/>
        <end position="532"/>
    </location>
</feature>
<feature type="compositionally biased region" description="Polar residues" evidence="2">
    <location>
        <begin position="539"/>
        <end position="555"/>
    </location>
</feature>
<feature type="compositionally biased region" description="Basic and acidic residues" evidence="2">
    <location>
        <begin position="673"/>
        <end position="685"/>
    </location>
</feature>
<feature type="binding site" evidence="6">
    <location>
        <begin position="99"/>
        <end position="101"/>
    </location>
    <ligand>
        <name>ATP</name>
        <dbReference type="ChEBI" id="CHEBI:30616"/>
    </ligand>
</feature>
<feature type="binding site" evidence="1">
    <location>
        <position position="108"/>
    </location>
    <ligand>
        <name>ATP</name>
        <dbReference type="ChEBI" id="CHEBI:30616"/>
    </ligand>
</feature>
<feature type="binding site" evidence="6">
    <location>
        <begin position="112"/>
        <end position="114"/>
    </location>
    <ligand>
        <name>ATP</name>
        <dbReference type="ChEBI" id="CHEBI:30616"/>
    </ligand>
</feature>
<feature type="binding site">
    <location>
        <position position="112"/>
    </location>
    <ligand>
        <name>Mg(2+)</name>
        <dbReference type="ChEBI" id="CHEBI:18420"/>
        <label>1</label>
        <note>catalytic</note>
    </ligand>
</feature>
<feature type="binding site" evidence="1">
    <location>
        <position position="112"/>
    </location>
    <ligand>
        <name>Mg(2+)</name>
        <dbReference type="ChEBI" id="CHEBI:18420"/>
        <label>2</label>
        <note>catalytic</note>
    </ligand>
</feature>
<feature type="binding site">
    <location>
        <position position="114"/>
    </location>
    <ligand>
        <name>Mg(2+)</name>
        <dbReference type="ChEBI" id="CHEBI:18420"/>
        <label>1</label>
        <note>catalytic</note>
    </ligand>
</feature>
<feature type="binding site" evidence="1">
    <location>
        <position position="114"/>
    </location>
    <ligand>
        <name>Mg(2+)</name>
        <dbReference type="ChEBI" id="CHEBI:18420"/>
        <label>2</label>
        <note>catalytic</note>
    </ligand>
</feature>
<feature type="binding site" evidence="1">
    <location>
        <position position="166"/>
    </location>
    <ligand>
        <name>ATP</name>
        <dbReference type="ChEBI" id="CHEBI:30616"/>
    </ligand>
</feature>
<feature type="binding site" evidence="1">
    <location>
        <position position="166"/>
    </location>
    <ligand>
        <name>Mg(2+)</name>
        <dbReference type="ChEBI" id="CHEBI:18420"/>
        <label>2</label>
        <note>catalytic</note>
    </ligand>
</feature>
<feature type="binding site" evidence="6">
    <location>
        <position position="227"/>
    </location>
    <ligand>
        <name>ATP</name>
        <dbReference type="ChEBI" id="CHEBI:30616"/>
    </ligand>
</feature>
<feature type="binding site" evidence="6">
    <location>
        <position position="236"/>
    </location>
    <ligand>
        <name>ATP</name>
        <dbReference type="ChEBI" id="CHEBI:30616"/>
    </ligand>
</feature>
<feature type="binding site" evidence="6">
    <location>
        <begin position="245"/>
        <end position="246"/>
    </location>
    <ligand>
        <name>ATP</name>
        <dbReference type="ChEBI" id="CHEBI:30616"/>
    </ligand>
</feature>
<feature type="site" description="Interaction with RNA" evidence="1">
    <location>
        <position position="152"/>
    </location>
</feature>
<feature type="site" description="Interaction with RNA" evidence="1">
    <location>
        <position position="157"/>
    </location>
</feature>
<feature type="site" description="Interaction with RNA" evidence="1">
    <location>
        <position position="327"/>
    </location>
</feature>
<feature type="site" description="Interaction with RNA" evidence="1">
    <location>
        <position position="398"/>
    </location>
</feature>
<feature type="site" description="Interaction with RNA" evidence="1">
    <location>
        <position position="532"/>
    </location>
</feature>
<feature type="modified residue" description="N6-acetyllysine" evidence="13">
    <location>
        <position position="2"/>
    </location>
</feature>
<feature type="modified residue" description="Phosphoserine" evidence="11 14">
    <location>
        <position position="23"/>
    </location>
</feature>
<feature type="modified residue" description="Phosphoserine" evidence="14">
    <location>
        <position position="29"/>
    </location>
</feature>
<feature type="modified residue" description="Phosphoserine" evidence="14">
    <location>
        <position position="525"/>
    </location>
</feature>
<feature type="modified residue" description="Phosphoserine" evidence="14">
    <location>
        <position position="599"/>
    </location>
</feature>
<feature type="modified residue" description="Phosphoserine" evidence="11">
    <location>
        <position position="648"/>
    </location>
</feature>
<feature type="modified residue" description="Phosphothreonine" evidence="11">
    <location>
        <position position="654"/>
    </location>
</feature>
<feature type="modified residue" description="Phosphoserine" evidence="11 12 14">
    <location>
        <position position="684"/>
    </location>
</feature>
<feature type="modified residue" description="Phosphoserine" evidence="14">
    <location>
        <position position="708"/>
    </location>
</feature>
<feature type="splice variant" id="VSP_054379" description="In isoform 2." evidence="8">
    <location>
        <begin position="664"/>
        <end position="685"/>
    </location>
</feature>
<feature type="sequence conflict" description="In Ref. 1; AAK31791." evidence="9" ref="1">
    <original>K</original>
    <variation>E</variation>
    <location>
        <position position="31"/>
    </location>
</feature>
<feature type="sequence conflict" description="In Ref. 1; AAK31791." evidence="9" ref="1">
    <original>P</original>
    <variation>S</variation>
    <location>
        <position position="289"/>
    </location>
</feature>
<feature type="sequence conflict" description="In Ref. 1; AAK31791." evidence="9" ref="1">
    <original>T</original>
    <variation>I</variation>
    <location>
        <position position="619"/>
    </location>
</feature>
<feature type="strand" evidence="15">
    <location>
        <begin position="19"/>
        <end position="22"/>
    </location>
</feature>
<feature type="helix" evidence="15">
    <location>
        <begin position="32"/>
        <end position="45"/>
    </location>
</feature>
<feature type="helix" evidence="15">
    <location>
        <begin position="46"/>
        <end position="48"/>
    </location>
</feature>
<feature type="helix" evidence="15">
    <location>
        <begin position="54"/>
        <end position="78"/>
    </location>
</feature>
<feature type="turn" evidence="15">
    <location>
        <begin position="79"/>
        <end position="83"/>
    </location>
</feature>
<feature type="helix" evidence="15">
    <location>
        <begin position="86"/>
        <end position="89"/>
    </location>
</feature>
<feature type="strand" evidence="15">
    <location>
        <begin position="95"/>
        <end position="99"/>
    </location>
</feature>
<feature type="helix" evidence="15">
    <location>
        <begin position="100"/>
        <end position="104"/>
    </location>
</feature>
<feature type="strand" evidence="15">
    <location>
        <begin position="113"/>
        <end position="119"/>
    </location>
</feature>
<feature type="helix" evidence="15">
    <location>
        <begin position="125"/>
        <end position="138"/>
    </location>
</feature>
<feature type="strand" evidence="15">
    <location>
        <begin position="142"/>
        <end position="148"/>
    </location>
</feature>
<feature type="strand" evidence="15">
    <location>
        <begin position="150"/>
        <end position="153"/>
    </location>
</feature>
<feature type="strand" evidence="15">
    <location>
        <begin position="155"/>
        <end position="160"/>
    </location>
</feature>
<feature type="strand" evidence="15">
    <location>
        <begin position="163"/>
        <end position="171"/>
    </location>
</feature>
<feature type="strand" evidence="15">
    <location>
        <begin position="173"/>
        <end position="175"/>
    </location>
</feature>
<feature type="helix" evidence="15">
    <location>
        <begin position="186"/>
        <end position="189"/>
    </location>
</feature>
<feature type="helix" evidence="15">
    <location>
        <begin position="194"/>
        <end position="211"/>
    </location>
</feature>
<feature type="helix" evidence="15">
    <location>
        <begin position="216"/>
        <end position="232"/>
    </location>
</feature>
<feature type="turn" evidence="15">
    <location>
        <begin position="238"/>
        <end position="241"/>
    </location>
</feature>
<feature type="helix" evidence="15">
    <location>
        <begin position="245"/>
        <end position="258"/>
    </location>
</feature>
<feature type="helix" evidence="15">
    <location>
        <begin position="264"/>
        <end position="277"/>
    </location>
</feature>
<feature type="turn" evidence="15">
    <location>
        <begin position="301"/>
        <end position="303"/>
    </location>
</feature>
<feature type="helix" evidence="15">
    <location>
        <begin position="307"/>
        <end position="309"/>
    </location>
</feature>
<feature type="strand" evidence="15">
    <location>
        <begin position="318"/>
        <end position="320"/>
    </location>
</feature>
<feature type="helix" evidence="15">
    <location>
        <begin position="330"/>
        <end position="350"/>
    </location>
</feature>
<feature type="turn" evidence="15">
    <location>
        <begin position="351"/>
        <end position="353"/>
    </location>
</feature>
<feature type="helix" evidence="15">
    <location>
        <begin position="357"/>
        <end position="361"/>
    </location>
</feature>
<feature type="turn" evidence="15">
    <location>
        <begin position="366"/>
        <end position="368"/>
    </location>
</feature>
<feature type="strand" evidence="15">
    <location>
        <begin position="371"/>
        <end position="382"/>
    </location>
</feature>
<feature type="helix" evidence="15">
    <location>
        <begin position="383"/>
        <end position="394"/>
    </location>
</feature>
<feature type="helix" evidence="15">
    <location>
        <begin position="397"/>
        <end position="406"/>
    </location>
</feature>
<feature type="strand" evidence="15">
    <location>
        <begin position="410"/>
        <end position="420"/>
    </location>
</feature>
<feature type="strand" evidence="15">
    <location>
        <begin position="432"/>
        <end position="442"/>
    </location>
</feature>
<feature type="helix" evidence="15">
    <location>
        <begin position="456"/>
        <end position="472"/>
    </location>
</feature>
<feature type="strand" evidence="15">
    <location>
        <begin position="481"/>
        <end position="489"/>
    </location>
</feature>
<feature type="helix" evidence="15">
    <location>
        <begin position="492"/>
        <end position="494"/>
    </location>
</feature>
<accession>Q9BWT3</accession>
<accession>B2RBH4</accession>
<accession>Q59G05</accession>
<accession>Q969N1</accession>
<accession>Q9H8L2</accession>
<accession>Q9HAD0</accession>
<reference key="1">
    <citation type="journal article" date="2001" name="J. Biol. Chem.">
        <title>Purification, characterization, and cloning of the cDNA of human signal recognition particle RNA 3'-adenylating enzyme.</title>
        <authorList>
            <person name="Perumal K."/>
            <person name="Sinha K."/>
            <person name="Henning D."/>
            <person name="Reddy R."/>
        </authorList>
    </citation>
    <scope>NUCLEOTIDE SEQUENCE [MRNA] (ISOFORM 1)</scope>
    <scope>PARTIAL PROTEIN SEQUENCE</scope>
    <scope>FUNCTION</scope>
    <scope>CATALYTIC ACTIVITY</scope>
    <scope>SUBCELLULAR LOCATION</scope>
</reference>
<reference key="2">
    <citation type="journal article" date="2001" name="Mol. Cell. Biol.">
        <title>Identification and functional characterization of neo-poly(A) polymerase, an RNA processing enzyme overexpressed in human tumors.</title>
        <authorList>
            <person name="Topalian S.L."/>
            <person name="Kaneko S."/>
            <person name="Gonzales M.I."/>
            <person name="Bond G.L."/>
            <person name="Ward Y."/>
            <person name="Manley J.L."/>
        </authorList>
    </citation>
    <scope>NUCLEOTIDE SEQUENCE [MRNA] (ISOFORM 1)</scope>
    <scope>FUNCTION</scope>
    <scope>CATALYTIC ACTIVITY</scope>
    <scope>TISSUE SPECIFICITY</scope>
    <scope>SUBCELLULAR LOCATION</scope>
    <source>
        <tissue>Melanoma</tissue>
    </source>
</reference>
<reference key="3">
    <citation type="journal article" date="2001" name="J. Biol. Chem.">
        <title>A novel nuclear human poly(A) polymerase (PAP), PAP gamma.</title>
        <authorList>
            <person name="Kyriakopoulou C.B."/>
            <person name="Nordvarg H."/>
            <person name="Virtanen A."/>
        </authorList>
    </citation>
    <scope>NUCLEOTIDE SEQUENCE [MRNA] (ISOFORM 1)</scope>
    <scope>CATALYTIC ACTIVITY</scope>
    <scope>BIOPHYSICOCHEMICAL PROPERTIES</scope>
    <scope>SUBCELLULAR LOCATION</scope>
    <source>
        <tissue>Cervix carcinoma</tissue>
    </source>
</reference>
<reference key="4">
    <citation type="journal article" date="2004" name="Nat. Genet.">
        <title>Complete sequencing and characterization of 21,243 full-length human cDNAs.</title>
        <authorList>
            <person name="Ota T."/>
            <person name="Suzuki Y."/>
            <person name="Nishikawa T."/>
            <person name="Otsuki T."/>
            <person name="Sugiyama T."/>
            <person name="Irie R."/>
            <person name="Wakamatsu A."/>
            <person name="Hayashi K."/>
            <person name="Sato H."/>
            <person name="Nagai K."/>
            <person name="Kimura K."/>
            <person name="Makita H."/>
            <person name="Sekine M."/>
            <person name="Obayashi M."/>
            <person name="Nishi T."/>
            <person name="Shibahara T."/>
            <person name="Tanaka T."/>
            <person name="Ishii S."/>
            <person name="Yamamoto J."/>
            <person name="Saito K."/>
            <person name="Kawai Y."/>
            <person name="Isono Y."/>
            <person name="Nakamura Y."/>
            <person name="Nagahari K."/>
            <person name="Murakami K."/>
            <person name="Yasuda T."/>
            <person name="Iwayanagi T."/>
            <person name="Wagatsuma M."/>
            <person name="Shiratori A."/>
            <person name="Sudo H."/>
            <person name="Hosoiri T."/>
            <person name="Kaku Y."/>
            <person name="Kodaira H."/>
            <person name="Kondo H."/>
            <person name="Sugawara M."/>
            <person name="Takahashi M."/>
            <person name="Kanda K."/>
            <person name="Yokoi T."/>
            <person name="Furuya T."/>
            <person name="Kikkawa E."/>
            <person name="Omura Y."/>
            <person name="Abe K."/>
            <person name="Kamihara K."/>
            <person name="Katsuta N."/>
            <person name="Sato K."/>
            <person name="Tanikawa M."/>
            <person name="Yamazaki M."/>
            <person name="Ninomiya K."/>
            <person name="Ishibashi T."/>
            <person name="Yamashita H."/>
            <person name="Murakawa K."/>
            <person name="Fujimori K."/>
            <person name="Tanai H."/>
            <person name="Kimata M."/>
            <person name="Watanabe M."/>
            <person name="Hiraoka S."/>
            <person name="Chiba Y."/>
            <person name="Ishida S."/>
            <person name="Ono Y."/>
            <person name="Takiguchi S."/>
            <person name="Watanabe S."/>
            <person name="Yosida M."/>
            <person name="Hotuta T."/>
            <person name="Kusano J."/>
            <person name="Kanehori K."/>
            <person name="Takahashi-Fujii A."/>
            <person name="Hara H."/>
            <person name="Tanase T.-O."/>
            <person name="Nomura Y."/>
            <person name="Togiya S."/>
            <person name="Komai F."/>
            <person name="Hara R."/>
            <person name="Takeuchi K."/>
            <person name="Arita M."/>
            <person name="Imose N."/>
            <person name="Musashino K."/>
            <person name="Yuuki H."/>
            <person name="Oshima A."/>
            <person name="Sasaki N."/>
            <person name="Aotsuka S."/>
            <person name="Yoshikawa Y."/>
            <person name="Matsunawa H."/>
            <person name="Ichihara T."/>
            <person name="Shiohata N."/>
            <person name="Sano S."/>
            <person name="Moriya S."/>
            <person name="Momiyama H."/>
            <person name="Satoh N."/>
            <person name="Takami S."/>
            <person name="Terashima Y."/>
            <person name="Suzuki O."/>
            <person name="Nakagawa S."/>
            <person name="Senoh A."/>
            <person name="Mizoguchi H."/>
            <person name="Goto Y."/>
            <person name="Shimizu F."/>
            <person name="Wakebe H."/>
            <person name="Hishigaki H."/>
            <person name="Watanabe T."/>
            <person name="Sugiyama A."/>
            <person name="Takemoto M."/>
            <person name="Kawakami B."/>
            <person name="Yamazaki M."/>
            <person name="Watanabe K."/>
            <person name="Kumagai A."/>
            <person name="Itakura S."/>
            <person name="Fukuzumi Y."/>
            <person name="Fujimori Y."/>
            <person name="Komiyama M."/>
            <person name="Tashiro H."/>
            <person name="Tanigami A."/>
            <person name="Fujiwara T."/>
            <person name="Ono T."/>
            <person name="Yamada K."/>
            <person name="Fujii Y."/>
            <person name="Ozaki K."/>
            <person name="Hirao M."/>
            <person name="Ohmori Y."/>
            <person name="Kawabata A."/>
            <person name="Hikiji T."/>
            <person name="Kobatake N."/>
            <person name="Inagaki H."/>
            <person name="Ikema Y."/>
            <person name="Okamoto S."/>
            <person name="Okitani R."/>
            <person name="Kawakami T."/>
            <person name="Noguchi S."/>
            <person name="Itoh T."/>
            <person name="Shigeta K."/>
            <person name="Senba T."/>
            <person name="Matsumura K."/>
            <person name="Nakajima Y."/>
            <person name="Mizuno T."/>
            <person name="Morinaga M."/>
            <person name="Sasaki M."/>
            <person name="Togashi T."/>
            <person name="Oyama M."/>
            <person name="Hata H."/>
            <person name="Watanabe M."/>
            <person name="Komatsu T."/>
            <person name="Mizushima-Sugano J."/>
            <person name="Satoh T."/>
            <person name="Shirai Y."/>
            <person name="Takahashi Y."/>
            <person name="Nakagawa K."/>
            <person name="Okumura K."/>
            <person name="Nagase T."/>
            <person name="Nomura N."/>
            <person name="Kikuchi H."/>
            <person name="Masuho Y."/>
            <person name="Yamashita R."/>
            <person name="Nakai K."/>
            <person name="Yada T."/>
            <person name="Nakamura Y."/>
            <person name="Ohara O."/>
            <person name="Isogai T."/>
            <person name="Sugano S."/>
        </authorList>
    </citation>
    <scope>NUCLEOTIDE SEQUENCE [LARGE SCALE MRNA] (ISOFORM 1)</scope>
    <source>
        <tissue>Embryo</tissue>
        <tissue>Placenta</tissue>
    </source>
</reference>
<reference key="5">
    <citation type="journal article" date="2005" name="Nature">
        <title>Generation and annotation of the DNA sequences of human chromosomes 2 and 4.</title>
        <authorList>
            <person name="Hillier L.W."/>
            <person name="Graves T.A."/>
            <person name="Fulton R.S."/>
            <person name="Fulton L.A."/>
            <person name="Pepin K.H."/>
            <person name="Minx P."/>
            <person name="Wagner-McPherson C."/>
            <person name="Layman D."/>
            <person name="Wylie K."/>
            <person name="Sekhon M."/>
            <person name="Becker M.C."/>
            <person name="Fewell G.A."/>
            <person name="Delehaunty K.D."/>
            <person name="Miner T.L."/>
            <person name="Nash W.E."/>
            <person name="Kremitzki C."/>
            <person name="Oddy L."/>
            <person name="Du H."/>
            <person name="Sun H."/>
            <person name="Bradshaw-Cordum H."/>
            <person name="Ali J."/>
            <person name="Carter J."/>
            <person name="Cordes M."/>
            <person name="Harris A."/>
            <person name="Isak A."/>
            <person name="van Brunt A."/>
            <person name="Nguyen C."/>
            <person name="Du F."/>
            <person name="Courtney L."/>
            <person name="Kalicki J."/>
            <person name="Ozersky P."/>
            <person name="Abbott S."/>
            <person name="Armstrong J."/>
            <person name="Belter E.A."/>
            <person name="Caruso L."/>
            <person name="Cedroni M."/>
            <person name="Cotton M."/>
            <person name="Davidson T."/>
            <person name="Desai A."/>
            <person name="Elliott G."/>
            <person name="Erb T."/>
            <person name="Fronick C."/>
            <person name="Gaige T."/>
            <person name="Haakenson W."/>
            <person name="Haglund K."/>
            <person name="Holmes A."/>
            <person name="Harkins R."/>
            <person name="Kim K."/>
            <person name="Kruchowski S.S."/>
            <person name="Strong C.M."/>
            <person name="Grewal N."/>
            <person name="Goyea E."/>
            <person name="Hou S."/>
            <person name="Levy A."/>
            <person name="Martinka S."/>
            <person name="Mead K."/>
            <person name="McLellan M.D."/>
            <person name="Meyer R."/>
            <person name="Randall-Maher J."/>
            <person name="Tomlinson C."/>
            <person name="Dauphin-Kohlberg S."/>
            <person name="Kozlowicz-Reilly A."/>
            <person name="Shah N."/>
            <person name="Swearengen-Shahid S."/>
            <person name="Snider J."/>
            <person name="Strong J.T."/>
            <person name="Thompson J."/>
            <person name="Yoakum M."/>
            <person name="Leonard S."/>
            <person name="Pearman C."/>
            <person name="Trani L."/>
            <person name="Radionenko M."/>
            <person name="Waligorski J.E."/>
            <person name="Wang C."/>
            <person name="Rock S.M."/>
            <person name="Tin-Wollam A.-M."/>
            <person name="Maupin R."/>
            <person name="Latreille P."/>
            <person name="Wendl M.C."/>
            <person name="Yang S.-P."/>
            <person name="Pohl C."/>
            <person name="Wallis J.W."/>
            <person name="Spieth J."/>
            <person name="Bieri T.A."/>
            <person name="Berkowicz N."/>
            <person name="Nelson J.O."/>
            <person name="Osborne J."/>
            <person name="Ding L."/>
            <person name="Meyer R."/>
            <person name="Sabo A."/>
            <person name="Shotland Y."/>
            <person name="Sinha P."/>
            <person name="Wohldmann P.E."/>
            <person name="Cook L.L."/>
            <person name="Hickenbotham M.T."/>
            <person name="Eldred J."/>
            <person name="Williams D."/>
            <person name="Jones T.A."/>
            <person name="She X."/>
            <person name="Ciccarelli F.D."/>
            <person name="Izaurralde E."/>
            <person name="Taylor J."/>
            <person name="Schmutz J."/>
            <person name="Myers R.M."/>
            <person name="Cox D.R."/>
            <person name="Huang X."/>
            <person name="McPherson J.D."/>
            <person name="Mardis E.R."/>
            <person name="Clifton S.W."/>
            <person name="Warren W.C."/>
            <person name="Chinwalla A.T."/>
            <person name="Eddy S.R."/>
            <person name="Marra M.A."/>
            <person name="Ovcharenko I."/>
            <person name="Furey T.S."/>
            <person name="Miller W."/>
            <person name="Eichler E.E."/>
            <person name="Bork P."/>
            <person name="Suyama M."/>
            <person name="Torrents D."/>
            <person name="Waterston R.H."/>
            <person name="Wilson R.K."/>
        </authorList>
    </citation>
    <scope>NUCLEOTIDE SEQUENCE [LARGE SCALE GENOMIC DNA]</scope>
</reference>
<reference key="6">
    <citation type="submission" date="2005-09" db="EMBL/GenBank/DDBJ databases">
        <authorList>
            <person name="Mural R.J."/>
            <person name="Istrail S."/>
            <person name="Sutton G.G."/>
            <person name="Florea L."/>
            <person name="Halpern A.L."/>
            <person name="Mobarry C.M."/>
            <person name="Lippert R."/>
            <person name="Walenz B."/>
            <person name="Shatkay H."/>
            <person name="Dew I."/>
            <person name="Miller J.R."/>
            <person name="Flanigan M.J."/>
            <person name="Edwards N.J."/>
            <person name="Bolanos R."/>
            <person name="Fasulo D."/>
            <person name="Halldorsson B.V."/>
            <person name="Hannenhalli S."/>
            <person name="Turner R."/>
            <person name="Yooseph S."/>
            <person name="Lu F."/>
            <person name="Nusskern D.R."/>
            <person name="Shue B.C."/>
            <person name="Zheng X.H."/>
            <person name="Zhong F."/>
            <person name="Delcher A.L."/>
            <person name="Huson D.H."/>
            <person name="Kravitz S.A."/>
            <person name="Mouchard L."/>
            <person name="Reinert K."/>
            <person name="Remington K.A."/>
            <person name="Clark A.G."/>
            <person name="Waterman M.S."/>
            <person name="Eichler E.E."/>
            <person name="Adams M.D."/>
            <person name="Hunkapiller M.W."/>
            <person name="Myers E.W."/>
            <person name="Venter J.C."/>
        </authorList>
    </citation>
    <scope>NUCLEOTIDE SEQUENCE [LARGE SCALE GENOMIC DNA]</scope>
</reference>
<reference key="7">
    <citation type="journal article" date="2004" name="Genome Res.">
        <title>The status, quality, and expansion of the NIH full-length cDNA project: the Mammalian Gene Collection (MGC).</title>
        <authorList>
            <consortium name="The MGC Project Team"/>
        </authorList>
    </citation>
    <scope>NUCLEOTIDE SEQUENCE [LARGE SCALE MRNA] (ISOFORM 1)</scope>
</reference>
<reference key="8">
    <citation type="submission" date="2005-03" db="EMBL/GenBank/DDBJ databases">
        <title>Homo sapiens protein coding cDNA.</title>
        <authorList>
            <person name="Totoki Y."/>
            <person name="Toyoda A."/>
            <person name="Takeda T."/>
            <person name="Sakaki Y."/>
            <person name="Tanaka A."/>
            <person name="Yokoyama S."/>
            <person name="Ohara O."/>
            <person name="Nagase T."/>
            <person name="Kikuno R.F."/>
        </authorList>
    </citation>
    <scope>NUCLEOTIDE SEQUENCE [LARGE SCALE MRNA] OF 333-736 (ISOFORM 2)</scope>
    <source>
        <tissue>Brain</tissue>
    </source>
</reference>
<reference key="9">
    <citation type="journal article" date="2008" name="J. Proteome Res.">
        <title>Combining protein-based IMAC, peptide-based IMAC, and MudPIT for efficient phosphoproteomic analysis.</title>
        <authorList>
            <person name="Cantin G.T."/>
            <person name="Yi W."/>
            <person name="Lu B."/>
            <person name="Park S.K."/>
            <person name="Xu T."/>
            <person name="Lee J.-D."/>
            <person name="Yates J.R. III"/>
        </authorList>
    </citation>
    <scope>IDENTIFICATION BY MASS SPECTROMETRY [LARGE SCALE ANALYSIS]</scope>
    <source>
        <tissue>Cervix carcinoma</tissue>
    </source>
</reference>
<reference key="10">
    <citation type="journal article" date="2008" name="Proc. Natl. Acad. Sci. U.S.A.">
        <title>A quantitative atlas of mitotic phosphorylation.</title>
        <authorList>
            <person name="Dephoure N."/>
            <person name="Zhou C."/>
            <person name="Villen J."/>
            <person name="Beausoleil S.A."/>
            <person name="Bakalarski C.E."/>
            <person name="Elledge S.J."/>
            <person name="Gygi S.P."/>
        </authorList>
    </citation>
    <scope>PHOSPHORYLATION [LARGE SCALE ANALYSIS] AT SER-23; SER-648; THR-654 AND SER-684</scope>
    <scope>IDENTIFICATION BY MASS SPECTROMETRY [LARGE SCALE ANALYSIS]</scope>
    <source>
        <tissue>Cervix carcinoma</tissue>
    </source>
</reference>
<reference key="11">
    <citation type="journal article" date="2009" name="Anal. Chem.">
        <title>Lys-N and trypsin cover complementary parts of the phosphoproteome in a refined SCX-based approach.</title>
        <authorList>
            <person name="Gauci S."/>
            <person name="Helbig A.O."/>
            <person name="Slijper M."/>
            <person name="Krijgsveld J."/>
            <person name="Heck A.J."/>
            <person name="Mohammed S."/>
        </authorList>
    </citation>
    <scope>IDENTIFICATION BY MASS SPECTROMETRY [LARGE SCALE ANALYSIS]</scope>
</reference>
<reference key="12">
    <citation type="journal article" date="2009" name="Sci. Signal.">
        <title>Quantitative phosphoproteomic analysis of T cell receptor signaling reveals system-wide modulation of protein-protein interactions.</title>
        <authorList>
            <person name="Mayya V."/>
            <person name="Lundgren D.H."/>
            <person name="Hwang S.-I."/>
            <person name="Rezaul K."/>
            <person name="Wu L."/>
            <person name="Eng J.K."/>
            <person name="Rodionov V."/>
            <person name="Han D.K."/>
        </authorList>
    </citation>
    <scope>PHOSPHORYLATION [LARGE SCALE ANALYSIS] AT SER-684</scope>
    <scope>IDENTIFICATION BY MASS SPECTROMETRY [LARGE SCALE ANALYSIS]</scope>
    <source>
        <tissue>Leukemic T-cell</tissue>
    </source>
</reference>
<reference key="13">
    <citation type="journal article" date="2011" name="BMC Syst. Biol.">
        <title>Initial characterization of the human central proteome.</title>
        <authorList>
            <person name="Burkard T.R."/>
            <person name="Planyavsky M."/>
            <person name="Kaupe I."/>
            <person name="Breitwieser F.P."/>
            <person name="Buerckstuemmer T."/>
            <person name="Bennett K.L."/>
            <person name="Superti-Furga G."/>
            <person name="Colinge J."/>
        </authorList>
    </citation>
    <scope>IDENTIFICATION BY MASS SPECTROMETRY [LARGE SCALE ANALYSIS]</scope>
</reference>
<reference key="14">
    <citation type="journal article" date="2011" name="Sci. Signal.">
        <title>System-wide temporal characterization of the proteome and phosphoproteome of human embryonic stem cell differentiation.</title>
        <authorList>
            <person name="Rigbolt K.T."/>
            <person name="Prokhorova T.A."/>
            <person name="Akimov V."/>
            <person name="Henningsen J."/>
            <person name="Johansen P.T."/>
            <person name="Kratchmarova I."/>
            <person name="Kassem M."/>
            <person name="Mann M."/>
            <person name="Olsen J.V."/>
            <person name="Blagoev B."/>
        </authorList>
    </citation>
    <scope>ACETYLATION [LARGE SCALE ANALYSIS] AT LYS-2</scope>
    <scope>IDENTIFICATION BY MASS SPECTROMETRY [LARGE SCALE ANALYSIS]</scope>
</reference>
<reference key="15">
    <citation type="journal article" date="2012" name="Proc. Natl. Acad. Sci. U.S.A.">
        <title>N-terminal acetylome analyses and functional insights of the N-terminal acetyltransferase NatB.</title>
        <authorList>
            <person name="Van Damme P."/>
            <person name="Lasa M."/>
            <person name="Polevoda B."/>
            <person name="Gazquez C."/>
            <person name="Elosegui-Artola A."/>
            <person name="Kim D.S."/>
            <person name="De Juan-Pardo E."/>
            <person name="Demeyer K."/>
            <person name="Hole K."/>
            <person name="Larrea E."/>
            <person name="Timmerman E."/>
            <person name="Prieto J."/>
            <person name="Arnesen T."/>
            <person name="Sherman F."/>
            <person name="Gevaert K."/>
            <person name="Aldabe R."/>
        </authorList>
    </citation>
    <scope>IDENTIFICATION BY MASS SPECTROMETRY [LARGE SCALE ANALYSIS]</scope>
</reference>
<reference key="16">
    <citation type="journal article" date="2013" name="J. Proteome Res.">
        <title>Toward a comprehensive characterization of a human cancer cell phosphoproteome.</title>
        <authorList>
            <person name="Zhou H."/>
            <person name="Di Palma S."/>
            <person name="Preisinger C."/>
            <person name="Peng M."/>
            <person name="Polat A.N."/>
            <person name="Heck A.J."/>
            <person name="Mohammed S."/>
        </authorList>
    </citation>
    <scope>PHOSPHORYLATION [LARGE SCALE ANALYSIS] AT SER-23; SER-29; SER-525; SER-599; SER-684 AND SER-708</scope>
    <scope>IDENTIFICATION BY MASS SPECTROMETRY [LARGE SCALE ANALYSIS]</scope>
    <source>
        <tissue>Cervix carcinoma</tissue>
        <tissue>Erythroleukemia</tissue>
    </source>
</reference>
<reference key="17">
    <citation type="journal article" date="2014" name="J. Mol. Biol.">
        <title>Crystal structure of human poly(A) polymerase gamma reveals a conserved catalytic core for canonical poly(A) polymerases.</title>
        <authorList>
            <person name="Yang Q."/>
            <person name="Nausch L."/>
            <person name="Martin G."/>
            <person name="Keller W."/>
            <person name="Doublie S."/>
        </authorList>
    </citation>
    <scope>X-RAY CRYSTALLOGRAPHY (2.79 ANGSTROMS) OF 1-508 IN COMPLEX WITH ATP AND CALCIUM IONS</scope>
</reference>
<proteinExistence type="evidence at protein level"/>
<dbReference type="EC" id="2.7.7.19" evidence="3 4 5"/>
<dbReference type="EMBL" id="AY029162">
    <property type="protein sequence ID" value="AAK31791.1"/>
    <property type="molecule type" value="mRNA"/>
</dbReference>
<dbReference type="EMBL" id="AF312211">
    <property type="protein sequence ID" value="AAK83701.1"/>
    <property type="molecule type" value="mRNA"/>
</dbReference>
<dbReference type="EMBL" id="AJ308101">
    <property type="protein sequence ID" value="CAC59751.1"/>
    <property type="molecule type" value="mRNA"/>
</dbReference>
<dbReference type="EMBL" id="AK021867">
    <property type="protein sequence ID" value="BAB13919.1"/>
    <property type="molecule type" value="mRNA"/>
</dbReference>
<dbReference type="EMBL" id="AK023544">
    <property type="protein sequence ID" value="BAB14604.1"/>
    <property type="status" value="ALT_INIT"/>
    <property type="molecule type" value="mRNA"/>
</dbReference>
<dbReference type="EMBL" id="AK314663">
    <property type="protein sequence ID" value="BAG37221.1"/>
    <property type="molecule type" value="mRNA"/>
</dbReference>
<dbReference type="EMBL" id="AC011245">
    <property type="status" value="NOT_ANNOTATED_CDS"/>
    <property type="molecule type" value="Genomic_DNA"/>
</dbReference>
<dbReference type="EMBL" id="AC012498">
    <property type="status" value="NOT_ANNOTATED_CDS"/>
    <property type="molecule type" value="Genomic_DNA"/>
</dbReference>
<dbReference type="EMBL" id="CH471053">
    <property type="protein sequence ID" value="EAX00034.1"/>
    <property type="molecule type" value="Genomic_DNA"/>
</dbReference>
<dbReference type="EMBL" id="BC111701">
    <property type="protein sequence ID" value="AAI11702.1"/>
    <property type="molecule type" value="mRNA"/>
</dbReference>
<dbReference type="EMBL" id="BC113747">
    <property type="protein sequence ID" value="AAI13748.1"/>
    <property type="molecule type" value="mRNA"/>
</dbReference>
<dbReference type="EMBL" id="AB209304">
    <property type="protein sequence ID" value="BAD92541.1"/>
    <property type="molecule type" value="mRNA"/>
</dbReference>
<dbReference type="CCDS" id="CCDS1863.1">
    <molecule id="Q9BWT3-1"/>
</dbReference>
<dbReference type="RefSeq" id="NP_075045.2">
    <molecule id="Q9BWT3-1"/>
    <property type="nucleotide sequence ID" value="NM_022894.3"/>
</dbReference>
<dbReference type="RefSeq" id="XP_005264557.1">
    <molecule id="Q9BWT3-2"/>
    <property type="nucleotide sequence ID" value="XM_005264500.5"/>
</dbReference>
<dbReference type="RefSeq" id="XP_054199399.1">
    <molecule id="Q9BWT3-2"/>
    <property type="nucleotide sequence ID" value="XM_054343424.1"/>
</dbReference>
<dbReference type="PDB" id="4LT6">
    <property type="method" value="X-ray"/>
    <property type="resolution" value="2.79 A"/>
    <property type="chains" value="A/B=1-508"/>
</dbReference>
<dbReference type="PDBsum" id="4LT6"/>
<dbReference type="SMR" id="Q9BWT3"/>
<dbReference type="BioGRID" id="122338">
    <property type="interactions" value="40"/>
</dbReference>
<dbReference type="FunCoup" id="Q9BWT3">
    <property type="interactions" value="5235"/>
</dbReference>
<dbReference type="IntAct" id="Q9BWT3">
    <property type="interactions" value="29"/>
</dbReference>
<dbReference type="MINT" id="Q9BWT3"/>
<dbReference type="STRING" id="9606.ENSP00000238714"/>
<dbReference type="GlyGen" id="Q9BWT3">
    <property type="glycosylation" value="1 site, 1 O-linked glycan (1 site)"/>
</dbReference>
<dbReference type="iPTMnet" id="Q9BWT3"/>
<dbReference type="PhosphoSitePlus" id="Q9BWT3"/>
<dbReference type="BioMuta" id="PAPOLG"/>
<dbReference type="DMDM" id="116242699"/>
<dbReference type="jPOST" id="Q9BWT3"/>
<dbReference type="MassIVE" id="Q9BWT3"/>
<dbReference type="PaxDb" id="9606-ENSP00000238714"/>
<dbReference type="PeptideAtlas" id="Q9BWT3"/>
<dbReference type="ProteomicsDB" id="62654"/>
<dbReference type="ProteomicsDB" id="79313">
    <molecule id="Q9BWT3-1"/>
</dbReference>
<dbReference type="Pumba" id="Q9BWT3"/>
<dbReference type="Antibodypedia" id="30527">
    <property type="antibodies" value="132 antibodies from 20 providers"/>
</dbReference>
<dbReference type="DNASU" id="64895"/>
<dbReference type="Ensembl" id="ENST00000238714.8">
    <molecule id="Q9BWT3-1"/>
    <property type="protein sequence ID" value="ENSP00000238714.3"/>
    <property type="gene ID" value="ENSG00000115421.13"/>
</dbReference>
<dbReference type="GeneID" id="64895"/>
<dbReference type="KEGG" id="hsa:64895"/>
<dbReference type="MANE-Select" id="ENST00000238714.8">
    <property type="protein sequence ID" value="ENSP00000238714.3"/>
    <property type="RefSeq nucleotide sequence ID" value="NM_022894.4"/>
    <property type="RefSeq protein sequence ID" value="NP_075045.2"/>
</dbReference>
<dbReference type="UCSC" id="uc002sai.4">
    <molecule id="Q9BWT3-1"/>
    <property type="organism name" value="human"/>
</dbReference>
<dbReference type="AGR" id="HGNC:14982"/>
<dbReference type="CTD" id="64895"/>
<dbReference type="DisGeNET" id="64895"/>
<dbReference type="GeneCards" id="PAPOLG"/>
<dbReference type="HGNC" id="HGNC:14982">
    <property type="gene designation" value="PAPOLG"/>
</dbReference>
<dbReference type="HPA" id="ENSG00000115421">
    <property type="expression patterns" value="Low tissue specificity"/>
</dbReference>
<dbReference type="MIM" id="616865">
    <property type="type" value="gene"/>
</dbReference>
<dbReference type="neXtProt" id="NX_Q9BWT3"/>
<dbReference type="OpenTargets" id="ENSG00000115421"/>
<dbReference type="PharmGKB" id="PA32934"/>
<dbReference type="VEuPathDB" id="HostDB:ENSG00000115421"/>
<dbReference type="eggNOG" id="KOG2245">
    <property type="taxonomic scope" value="Eukaryota"/>
</dbReference>
<dbReference type="GeneTree" id="ENSGT00940000156467"/>
<dbReference type="HOGENOM" id="CLU_011511_1_2_1"/>
<dbReference type="InParanoid" id="Q9BWT3"/>
<dbReference type="OMA" id="WEGWIES"/>
<dbReference type="OrthoDB" id="412748at2759"/>
<dbReference type="PAN-GO" id="Q9BWT3">
    <property type="GO annotations" value="3 GO annotations based on evolutionary models"/>
</dbReference>
<dbReference type="PhylomeDB" id="Q9BWT3"/>
<dbReference type="TreeFam" id="TF300842"/>
<dbReference type="BRENDA" id="2.7.7.19">
    <property type="organism ID" value="2681"/>
</dbReference>
<dbReference type="PathwayCommons" id="Q9BWT3"/>
<dbReference type="SABIO-RK" id="Q9BWT3"/>
<dbReference type="SignaLink" id="Q9BWT3"/>
<dbReference type="BioGRID-ORCS" id="64895">
    <property type="hits" value="18 hits in 1160 CRISPR screens"/>
</dbReference>
<dbReference type="ChiTaRS" id="PAPOLG">
    <property type="organism name" value="human"/>
</dbReference>
<dbReference type="EvolutionaryTrace" id="Q9BWT3"/>
<dbReference type="GeneWiki" id="PAPOLG"/>
<dbReference type="GenomeRNAi" id="64895"/>
<dbReference type="Pharos" id="Q9BWT3">
    <property type="development level" value="Tbio"/>
</dbReference>
<dbReference type="PRO" id="PR:Q9BWT3"/>
<dbReference type="Proteomes" id="UP000005640">
    <property type="component" value="Chromosome 2"/>
</dbReference>
<dbReference type="RNAct" id="Q9BWT3">
    <property type="molecule type" value="protein"/>
</dbReference>
<dbReference type="Bgee" id="ENSG00000115421">
    <property type="expression patterns" value="Expressed in endothelial cell and 190 other cell types or tissues"/>
</dbReference>
<dbReference type="ExpressionAtlas" id="Q9BWT3">
    <property type="expression patterns" value="baseline and differential"/>
</dbReference>
<dbReference type="GO" id="GO:0005829">
    <property type="term" value="C:cytosol"/>
    <property type="evidence" value="ECO:0000314"/>
    <property type="project" value="HPA"/>
</dbReference>
<dbReference type="GO" id="GO:0016020">
    <property type="term" value="C:membrane"/>
    <property type="evidence" value="ECO:0007005"/>
    <property type="project" value="UniProtKB"/>
</dbReference>
<dbReference type="GO" id="GO:0016604">
    <property type="term" value="C:nuclear body"/>
    <property type="evidence" value="ECO:0000314"/>
    <property type="project" value="HPA"/>
</dbReference>
<dbReference type="GO" id="GO:0005654">
    <property type="term" value="C:nucleoplasm"/>
    <property type="evidence" value="ECO:0000314"/>
    <property type="project" value="HPA"/>
</dbReference>
<dbReference type="GO" id="GO:0005634">
    <property type="term" value="C:nucleus"/>
    <property type="evidence" value="ECO:0000314"/>
    <property type="project" value="UniProtKB"/>
</dbReference>
<dbReference type="GO" id="GO:0005524">
    <property type="term" value="F:ATP binding"/>
    <property type="evidence" value="ECO:0007669"/>
    <property type="project" value="UniProtKB-KW"/>
</dbReference>
<dbReference type="GO" id="GO:0046872">
    <property type="term" value="F:metal ion binding"/>
    <property type="evidence" value="ECO:0000314"/>
    <property type="project" value="UniProtKB"/>
</dbReference>
<dbReference type="GO" id="GO:1990817">
    <property type="term" value="F:poly(A) RNA polymerase activity"/>
    <property type="evidence" value="ECO:0000314"/>
    <property type="project" value="UniProtKB"/>
</dbReference>
<dbReference type="GO" id="GO:0003723">
    <property type="term" value="F:RNA binding"/>
    <property type="evidence" value="ECO:0007669"/>
    <property type="project" value="UniProtKB-KW"/>
</dbReference>
<dbReference type="GO" id="GO:0006397">
    <property type="term" value="P:mRNA processing"/>
    <property type="evidence" value="ECO:0007669"/>
    <property type="project" value="UniProtKB-KW"/>
</dbReference>
<dbReference type="GO" id="GO:0031123">
    <property type="term" value="P:RNA 3'-end processing"/>
    <property type="evidence" value="ECO:0007669"/>
    <property type="project" value="InterPro"/>
</dbReference>
<dbReference type="CDD" id="cd05402">
    <property type="entry name" value="NT_PAP_TUTase"/>
    <property type="match status" value="1"/>
</dbReference>
<dbReference type="FunFam" id="3.30.460.10:FF:000002">
    <property type="entry name" value="Poly(A) polymerase alpha, putative"/>
    <property type="match status" value="1"/>
</dbReference>
<dbReference type="FunFam" id="1.10.1410.10:FF:000001">
    <property type="entry name" value="Putative poly(A) polymerase gamma"/>
    <property type="match status" value="1"/>
</dbReference>
<dbReference type="FunFam" id="3.30.70.590:FF:000001">
    <property type="entry name" value="Putative poly(A) polymerase gamma"/>
    <property type="match status" value="1"/>
</dbReference>
<dbReference type="Gene3D" id="1.10.1410.10">
    <property type="match status" value="1"/>
</dbReference>
<dbReference type="Gene3D" id="3.30.460.10">
    <property type="entry name" value="Beta Polymerase, domain 2"/>
    <property type="match status" value="1"/>
</dbReference>
<dbReference type="Gene3D" id="3.30.70.590">
    <property type="entry name" value="Poly(A) polymerase predicted RNA binding domain"/>
    <property type="match status" value="1"/>
</dbReference>
<dbReference type="InterPro" id="IPR043519">
    <property type="entry name" value="NT_sf"/>
</dbReference>
<dbReference type="InterPro" id="IPR011068">
    <property type="entry name" value="NuclTrfase_I-like_C"/>
</dbReference>
<dbReference type="InterPro" id="IPR007012">
    <property type="entry name" value="PolA_pol_cen_dom"/>
</dbReference>
<dbReference type="InterPro" id="IPR048840">
    <property type="entry name" value="PolA_pol_NTPase"/>
</dbReference>
<dbReference type="InterPro" id="IPR007010">
    <property type="entry name" value="PolA_pol_RNA-bd_dom"/>
</dbReference>
<dbReference type="PANTHER" id="PTHR10682">
    <property type="entry name" value="POLY A POLYMERASE"/>
    <property type="match status" value="1"/>
</dbReference>
<dbReference type="PANTHER" id="PTHR10682:SF6">
    <property type="entry name" value="POLY(A) POLYMERASE GAMMA"/>
    <property type="match status" value="1"/>
</dbReference>
<dbReference type="Pfam" id="PF04928">
    <property type="entry name" value="PAP_central"/>
    <property type="match status" value="1"/>
</dbReference>
<dbReference type="Pfam" id="PF20750">
    <property type="entry name" value="PAP_NTPase"/>
    <property type="match status" value="1"/>
</dbReference>
<dbReference type="Pfam" id="PF04926">
    <property type="entry name" value="PAP_RNA-bind"/>
    <property type="match status" value="2"/>
</dbReference>
<dbReference type="SUPFAM" id="SSF81301">
    <property type="entry name" value="Nucleotidyltransferase"/>
    <property type="match status" value="1"/>
</dbReference>
<dbReference type="SUPFAM" id="SSF55003">
    <property type="entry name" value="PAP/Archaeal CCA-adding enzyme, C-terminal domain"/>
    <property type="match status" value="1"/>
</dbReference>
<dbReference type="SUPFAM" id="SSF81631">
    <property type="entry name" value="PAP/OAS1 substrate-binding domain"/>
    <property type="match status" value="1"/>
</dbReference>
<organism>
    <name type="scientific">Homo sapiens</name>
    <name type="common">Human</name>
    <dbReference type="NCBI Taxonomy" id="9606"/>
    <lineage>
        <taxon>Eukaryota</taxon>
        <taxon>Metazoa</taxon>
        <taxon>Chordata</taxon>
        <taxon>Craniata</taxon>
        <taxon>Vertebrata</taxon>
        <taxon>Euteleostomi</taxon>
        <taxon>Mammalia</taxon>
        <taxon>Eutheria</taxon>
        <taxon>Euarchontoglires</taxon>
        <taxon>Primates</taxon>
        <taxon>Haplorrhini</taxon>
        <taxon>Catarrhini</taxon>
        <taxon>Hominidae</taxon>
        <taxon>Homo</taxon>
    </lineage>
</organism>